<feature type="chain" id="PRO_0000341841" description="2-succinyl-5-enolpyruvyl-6-hydroxy-3-cyclohexene-1-carboxylate synthase">
    <location>
        <begin position="1"/>
        <end position="573"/>
    </location>
</feature>
<sequence>MRTENTATLNLIWGALILEELARIGVQHVCMAPGSRSTPLTLAAAQQTKLKRHLHFDERGLGFMALGLAKASRAPVAIITTSGTAVANLYPAIVEAWLTHVPLIVLSGDRPPELLDCGANQAIVQPGIFAHYAKQINLPTPDAHIAPQALLTTIDEAVANQTRPVHINCMYREPLYPSELGTPILDTESPYLKPLQTWLQLSRPYTQYGKYKQVSNPSDDAIMRFVHGKGVIVAGTLTPEQDPQQLIALSQKIGWPLLTDAQSQLRQHPAAIGNIDQLLQHPKARNLLQEADRVLVFGGRLLSKRLISYLAEQHWHSYWQVLPEQNRLDPSHNAKHVWHANAAQFTALNWYRSSSANWANTLITYNDELHNLFVRNIDHGEFGEAQVVRAIANTRPLEQQLFIGNSLPVRLYDMYAPVSCCTATTYTNRGASGIDGLLATACGLAAHEGKPTSLIIGDLSQLHDLNSLAIAKSLASPLVIVILNNDGGNIFNLLPVPNEQVRNDYYRLSHGLEFGYAAAMFNLPYNQVDNLADFQDSYNEALDFQGASIIEVNVSQTQASDQIAELNLWVKQS</sequence>
<name>MEND_SHESW</name>
<keyword id="KW-0460">Magnesium</keyword>
<keyword id="KW-0464">Manganese</keyword>
<keyword id="KW-0474">Menaquinone biosynthesis</keyword>
<keyword id="KW-0479">Metal-binding</keyword>
<keyword id="KW-0786">Thiamine pyrophosphate</keyword>
<keyword id="KW-0808">Transferase</keyword>
<protein>
    <recommendedName>
        <fullName evidence="1">2-succinyl-5-enolpyruvyl-6-hydroxy-3-cyclohexene-1-carboxylate synthase</fullName>
        <shortName evidence="1">SEPHCHC synthase</shortName>
        <ecNumber evidence="1">2.2.1.9</ecNumber>
    </recommendedName>
    <alternativeName>
        <fullName evidence="1">Menaquinone biosynthesis protein MenD</fullName>
    </alternativeName>
</protein>
<gene>
    <name evidence="1" type="primary">menD</name>
    <name type="ordered locus">Sputw3181_3898</name>
</gene>
<reference key="1">
    <citation type="submission" date="2006-12" db="EMBL/GenBank/DDBJ databases">
        <title>Complete sequence of Shewanella sp. W3-18-1.</title>
        <authorList>
            <consortium name="US DOE Joint Genome Institute"/>
            <person name="Copeland A."/>
            <person name="Lucas S."/>
            <person name="Lapidus A."/>
            <person name="Barry K."/>
            <person name="Detter J.C."/>
            <person name="Glavina del Rio T."/>
            <person name="Hammon N."/>
            <person name="Israni S."/>
            <person name="Dalin E."/>
            <person name="Tice H."/>
            <person name="Pitluck S."/>
            <person name="Chain P."/>
            <person name="Malfatti S."/>
            <person name="Shin M."/>
            <person name="Vergez L."/>
            <person name="Schmutz J."/>
            <person name="Larimer F."/>
            <person name="Land M."/>
            <person name="Hauser L."/>
            <person name="Kyrpides N."/>
            <person name="Lykidis A."/>
            <person name="Tiedje J."/>
            <person name="Richardson P."/>
        </authorList>
    </citation>
    <scope>NUCLEOTIDE SEQUENCE [LARGE SCALE GENOMIC DNA]</scope>
    <source>
        <strain>W3-18-1</strain>
    </source>
</reference>
<dbReference type="EC" id="2.2.1.9" evidence="1"/>
<dbReference type="EMBL" id="CP000503">
    <property type="protein sequence ID" value="ABM26702.1"/>
    <property type="molecule type" value="Genomic_DNA"/>
</dbReference>
<dbReference type="RefSeq" id="WP_011791125.1">
    <property type="nucleotide sequence ID" value="NC_008750.1"/>
</dbReference>
<dbReference type="SMR" id="A1RPV7"/>
<dbReference type="KEGG" id="shw:Sputw3181_3898"/>
<dbReference type="HOGENOM" id="CLU_006051_3_0_6"/>
<dbReference type="UniPathway" id="UPA00079"/>
<dbReference type="UniPathway" id="UPA01057">
    <property type="reaction ID" value="UER00164"/>
</dbReference>
<dbReference type="Proteomes" id="UP000002597">
    <property type="component" value="Chromosome"/>
</dbReference>
<dbReference type="GO" id="GO:0070204">
    <property type="term" value="F:2-succinyl-5-enolpyruvyl-6-hydroxy-3-cyclohexene-1-carboxylic-acid synthase activity"/>
    <property type="evidence" value="ECO:0007669"/>
    <property type="project" value="UniProtKB-UniRule"/>
</dbReference>
<dbReference type="GO" id="GO:0000287">
    <property type="term" value="F:magnesium ion binding"/>
    <property type="evidence" value="ECO:0007669"/>
    <property type="project" value="UniProtKB-UniRule"/>
</dbReference>
<dbReference type="GO" id="GO:0030145">
    <property type="term" value="F:manganese ion binding"/>
    <property type="evidence" value="ECO:0007669"/>
    <property type="project" value="UniProtKB-UniRule"/>
</dbReference>
<dbReference type="GO" id="GO:0030976">
    <property type="term" value="F:thiamine pyrophosphate binding"/>
    <property type="evidence" value="ECO:0007669"/>
    <property type="project" value="UniProtKB-UniRule"/>
</dbReference>
<dbReference type="GO" id="GO:0009234">
    <property type="term" value="P:menaquinone biosynthetic process"/>
    <property type="evidence" value="ECO:0007669"/>
    <property type="project" value="UniProtKB-UniRule"/>
</dbReference>
<dbReference type="CDD" id="cd07037">
    <property type="entry name" value="TPP_PYR_MenD"/>
    <property type="match status" value="1"/>
</dbReference>
<dbReference type="CDD" id="cd02009">
    <property type="entry name" value="TPP_SHCHC_synthase"/>
    <property type="match status" value="1"/>
</dbReference>
<dbReference type="Gene3D" id="3.40.50.970">
    <property type="match status" value="2"/>
</dbReference>
<dbReference type="Gene3D" id="3.40.50.1220">
    <property type="entry name" value="TPP-binding domain"/>
    <property type="match status" value="1"/>
</dbReference>
<dbReference type="HAMAP" id="MF_01659">
    <property type="entry name" value="MenD"/>
    <property type="match status" value="1"/>
</dbReference>
<dbReference type="InterPro" id="IPR029035">
    <property type="entry name" value="DHS-like_NAD/FAD-binding_dom"/>
</dbReference>
<dbReference type="InterPro" id="IPR004433">
    <property type="entry name" value="MenaQ_synth_MenD"/>
</dbReference>
<dbReference type="InterPro" id="IPR032264">
    <property type="entry name" value="MenD_middle"/>
</dbReference>
<dbReference type="InterPro" id="IPR029061">
    <property type="entry name" value="THDP-binding"/>
</dbReference>
<dbReference type="InterPro" id="IPR012001">
    <property type="entry name" value="Thiamin_PyroP_enz_TPP-bd_dom"/>
</dbReference>
<dbReference type="InterPro" id="IPR011766">
    <property type="entry name" value="TPP_enzyme_TPP-bd"/>
</dbReference>
<dbReference type="NCBIfam" id="TIGR00173">
    <property type="entry name" value="menD"/>
    <property type="match status" value="1"/>
</dbReference>
<dbReference type="PANTHER" id="PTHR42916">
    <property type="entry name" value="2-SUCCINYL-5-ENOLPYRUVYL-6-HYDROXY-3-CYCLOHEXENE-1-CARBOXYLATE SYNTHASE"/>
    <property type="match status" value="1"/>
</dbReference>
<dbReference type="PANTHER" id="PTHR42916:SF1">
    <property type="entry name" value="PROTEIN PHYLLO, CHLOROPLASTIC"/>
    <property type="match status" value="1"/>
</dbReference>
<dbReference type="Pfam" id="PF02775">
    <property type="entry name" value="TPP_enzyme_C"/>
    <property type="match status" value="1"/>
</dbReference>
<dbReference type="Pfam" id="PF16582">
    <property type="entry name" value="TPP_enzyme_M_2"/>
    <property type="match status" value="1"/>
</dbReference>
<dbReference type="Pfam" id="PF02776">
    <property type="entry name" value="TPP_enzyme_N"/>
    <property type="match status" value="1"/>
</dbReference>
<dbReference type="PIRSF" id="PIRSF004983">
    <property type="entry name" value="MenD"/>
    <property type="match status" value="1"/>
</dbReference>
<dbReference type="SUPFAM" id="SSF52467">
    <property type="entry name" value="DHS-like NAD/FAD-binding domain"/>
    <property type="match status" value="1"/>
</dbReference>
<dbReference type="SUPFAM" id="SSF52518">
    <property type="entry name" value="Thiamin diphosphate-binding fold (THDP-binding)"/>
    <property type="match status" value="2"/>
</dbReference>
<proteinExistence type="inferred from homology"/>
<accession>A1RPV7</accession>
<organism>
    <name type="scientific">Shewanella sp. (strain W3-18-1)</name>
    <dbReference type="NCBI Taxonomy" id="351745"/>
    <lineage>
        <taxon>Bacteria</taxon>
        <taxon>Pseudomonadati</taxon>
        <taxon>Pseudomonadota</taxon>
        <taxon>Gammaproteobacteria</taxon>
        <taxon>Alteromonadales</taxon>
        <taxon>Shewanellaceae</taxon>
        <taxon>Shewanella</taxon>
    </lineage>
</organism>
<comment type="function">
    <text evidence="1">Catalyzes the thiamine diphosphate-dependent decarboxylation of 2-oxoglutarate and the subsequent addition of the resulting succinic semialdehyde-thiamine pyrophosphate anion to isochorismate to yield 2-succinyl-5-enolpyruvyl-6-hydroxy-3-cyclohexene-1-carboxylate (SEPHCHC).</text>
</comment>
<comment type="catalytic activity">
    <reaction evidence="1">
        <text>isochorismate + 2-oxoglutarate + H(+) = 5-enolpyruvoyl-6-hydroxy-2-succinyl-cyclohex-3-ene-1-carboxylate + CO2</text>
        <dbReference type="Rhea" id="RHEA:25593"/>
        <dbReference type="ChEBI" id="CHEBI:15378"/>
        <dbReference type="ChEBI" id="CHEBI:16526"/>
        <dbReference type="ChEBI" id="CHEBI:16810"/>
        <dbReference type="ChEBI" id="CHEBI:29780"/>
        <dbReference type="ChEBI" id="CHEBI:58818"/>
        <dbReference type="EC" id="2.2.1.9"/>
    </reaction>
</comment>
<comment type="cofactor">
    <cofactor evidence="1">
        <name>Mg(2+)</name>
        <dbReference type="ChEBI" id="CHEBI:18420"/>
    </cofactor>
    <cofactor evidence="1">
        <name>Mn(2+)</name>
        <dbReference type="ChEBI" id="CHEBI:29035"/>
    </cofactor>
</comment>
<comment type="cofactor">
    <cofactor evidence="1">
        <name>thiamine diphosphate</name>
        <dbReference type="ChEBI" id="CHEBI:58937"/>
    </cofactor>
    <text evidence="1">Binds 1 thiamine pyrophosphate per subunit.</text>
</comment>
<comment type="pathway">
    <text evidence="1">Quinol/quinone metabolism; 1,4-dihydroxy-2-naphthoate biosynthesis; 1,4-dihydroxy-2-naphthoate from chorismate: step 2/7.</text>
</comment>
<comment type="pathway">
    <text evidence="1">Quinol/quinone metabolism; menaquinone biosynthesis.</text>
</comment>
<comment type="subunit">
    <text evidence="1">Homodimer.</text>
</comment>
<comment type="similarity">
    <text evidence="1">Belongs to the TPP enzyme family. MenD subfamily.</text>
</comment>
<evidence type="ECO:0000255" key="1">
    <source>
        <dbReference type="HAMAP-Rule" id="MF_01659"/>
    </source>
</evidence>